<organism>
    <name type="scientific">Treponema pallidum subsp. pallidum (strain SS14)</name>
    <dbReference type="NCBI Taxonomy" id="455434"/>
    <lineage>
        <taxon>Bacteria</taxon>
        <taxon>Pseudomonadati</taxon>
        <taxon>Spirochaetota</taxon>
        <taxon>Spirochaetia</taxon>
        <taxon>Spirochaetales</taxon>
        <taxon>Treponemataceae</taxon>
        <taxon>Treponema</taxon>
    </lineage>
</organism>
<comment type="similarity">
    <text evidence="1">Belongs to the bacterial ribosomal protein bL33 family.</text>
</comment>
<dbReference type="EMBL" id="CP000805">
    <property type="protein sequence ID" value="ACD70660.1"/>
    <property type="molecule type" value="Genomic_DNA"/>
</dbReference>
<dbReference type="RefSeq" id="WP_010881682.1">
    <property type="nucleotide sequence ID" value="NC_021508.1"/>
</dbReference>
<dbReference type="SMR" id="B2S2I1"/>
<dbReference type="GeneID" id="93876025"/>
<dbReference type="KEGG" id="tpp:TPASS_0234"/>
<dbReference type="PATRIC" id="fig|455434.6.peg.238"/>
<dbReference type="Proteomes" id="UP000001202">
    <property type="component" value="Chromosome"/>
</dbReference>
<dbReference type="GO" id="GO:0005737">
    <property type="term" value="C:cytoplasm"/>
    <property type="evidence" value="ECO:0007669"/>
    <property type="project" value="UniProtKB-ARBA"/>
</dbReference>
<dbReference type="GO" id="GO:1990904">
    <property type="term" value="C:ribonucleoprotein complex"/>
    <property type="evidence" value="ECO:0007669"/>
    <property type="project" value="UniProtKB-KW"/>
</dbReference>
<dbReference type="GO" id="GO:0005840">
    <property type="term" value="C:ribosome"/>
    <property type="evidence" value="ECO:0007669"/>
    <property type="project" value="UniProtKB-KW"/>
</dbReference>
<dbReference type="GO" id="GO:0003735">
    <property type="term" value="F:structural constituent of ribosome"/>
    <property type="evidence" value="ECO:0007669"/>
    <property type="project" value="InterPro"/>
</dbReference>
<dbReference type="GO" id="GO:0006412">
    <property type="term" value="P:translation"/>
    <property type="evidence" value="ECO:0007669"/>
    <property type="project" value="UniProtKB-UniRule"/>
</dbReference>
<dbReference type="Gene3D" id="2.20.28.120">
    <property type="entry name" value="Ribosomal protein L33"/>
    <property type="match status" value="1"/>
</dbReference>
<dbReference type="HAMAP" id="MF_00294">
    <property type="entry name" value="Ribosomal_bL33"/>
    <property type="match status" value="1"/>
</dbReference>
<dbReference type="InterPro" id="IPR001705">
    <property type="entry name" value="Ribosomal_bL33"/>
</dbReference>
<dbReference type="InterPro" id="IPR018264">
    <property type="entry name" value="Ribosomal_bL33_CS"/>
</dbReference>
<dbReference type="InterPro" id="IPR038584">
    <property type="entry name" value="Ribosomal_bL33_sf"/>
</dbReference>
<dbReference type="InterPro" id="IPR011332">
    <property type="entry name" value="Ribosomal_zn-bd"/>
</dbReference>
<dbReference type="NCBIfam" id="NF001764">
    <property type="entry name" value="PRK00504.1"/>
    <property type="match status" value="1"/>
</dbReference>
<dbReference type="NCBIfam" id="NF001860">
    <property type="entry name" value="PRK00595.1"/>
    <property type="match status" value="1"/>
</dbReference>
<dbReference type="NCBIfam" id="TIGR01023">
    <property type="entry name" value="rpmG_bact"/>
    <property type="match status" value="1"/>
</dbReference>
<dbReference type="PANTHER" id="PTHR43168">
    <property type="entry name" value="50S RIBOSOMAL PROTEIN L33, CHLOROPLASTIC"/>
    <property type="match status" value="1"/>
</dbReference>
<dbReference type="PANTHER" id="PTHR43168:SF2">
    <property type="entry name" value="LARGE RIBOSOMAL SUBUNIT PROTEIN BL33C"/>
    <property type="match status" value="1"/>
</dbReference>
<dbReference type="Pfam" id="PF00471">
    <property type="entry name" value="Ribosomal_L33"/>
    <property type="match status" value="1"/>
</dbReference>
<dbReference type="SUPFAM" id="SSF57829">
    <property type="entry name" value="Zn-binding ribosomal proteins"/>
    <property type="match status" value="1"/>
</dbReference>
<dbReference type="PROSITE" id="PS00582">
    <property type="entry name" value="RIBOSOMAL_L33"/>
    <property type="match status" value="1"/>
</dbReference>
<sequence length="56" mass="6820">MAKRTAVELIALQCTGCKRRNYTTSRNRRNVQEKLELRKYCPFERRRVLHREAKIK</sequence>
<feature type="chain" id="PRO_0000356770" description="Large ribosomal subunit protein bL33">
    <location>
        <begin position="1"/>
        <end position="56"/>
    </location>
</feature>
<reference key="1">
    <citation type="journal article" date="2008" name="BMC Microbiol.">
        <title>Complete genome sequence of Treponema pallidum ssp. pallidum strain SS14 determined with oligonucleotide arrays.</title>
        <authorList>
            <person name="Matejkova P."/>
            <person name="Strouhal M."/>
            <person name="Smajs D."/>
            <person name="Norris S.J."/>
            <person name="Palzkill T."/>
            <person name="Petrosino J.F."/>
            <person name="Sodergren E."/>
            <person name="Norton J.E."/>
            <person name="Singh J."/>
            <person name="Richmond T.A."/>
            <person name="Molla M.N."/>
            <person name="Albert T.J."/>
            <person name="Weinstock G.M."/>
        </authorList>
    </citation>
    <scope>NUCLEOTIDE SEQUENCE [LARGE SCALE GENOMIC DNA]</scope>
    <source>
        <strain>SS14</strain>
    </source>
</reference>
<evidence type="ECO:0000255" key="1">
    <source>
        <dbReference type="HAMAP-Rule" id="MF_00294"/>
    </source>
</evidence>
<evidence type="ECO:0000305" key="2"/>
<protein>
    <recommendedName>
        <fullName evidence="1">Large ribosomal subunit protein bL33</fullName>
    </recommendedName>
    <alternativeName>
        <fullName evidence="2">50S ribosomal protein L33</fullName>
    </alternativeName>
</protein>
<name>RL33_TREPS</name>
<accession>B2S2I1</accession>
<gene>
    <name evidence="1" type="primary">rpmG</name>
    <name type="ordered locus">TPASS_0234</name>
</gene>
<proteinExistence type="inferred from homology"/>
<keyword id="KW-0687">Ribonucleoprotein</keyword>
<keyword id="KW-0689">Ribosomal protein</keyword>